<comment type="function">
    <text evidence="1">Catalyzes the attachment of proline to tRNA(Pro) in a two-step reaction: proline is first activated by ATP to form Pro-AMP and then transferred to the acceptor end of tRNA(Pro). As ProRS can inadvertently accommodate and process non-cognate amino acids such as alanine and cysteine, to avoid such errors it has two additional distinct editing activities against alanine. One activity is designated as 'pretransfer' editing and involves the tRNA(Pro)-independent hydrolysis of activated Ala-AMP. The other activity is designated 'posttransfer' editing and involves deacylation of mischarged Ala-tRNA(Pro). The misacylated Cys-tRNA(Pro) is not edited by ProRS.</text>
</comment>
<comment type="catalytic activity">
    <reaction evidence="1">
        <text>tRNA(Pro) + L-proline + ATP = L-prolyl-tRNA(Pro) + AMP + diphosphate</text>
        <dbReference type="Rhea" id="RHEA:14305"/>
        <dbReference type="Rhea" id="RHEA-COMP:9700"/>
        <dbReference type="Rhea" id="RHEA-COMP:9702"/>
        <dbReference type="ChEBI" id="CHEBI:30616"/>
        <dbReference type="ChEBI" id="CHEBI:33019"/>
        <dbReference type="ChEBI" id="CHEBI:60039"/>
        <dbReference type="ChEBI" id="CHEBI:78442"/>
        <dbReference type="ChEBI" id="CHEBI:78532"/>
        <dbReference type="ChEBI" id="CHEBI:456215"/>
        <dbReference type="EC" id="6.1.1.15"/>
    </reaction>
</comment>
<comment type="subunit">
    <text evidence="1">Homodimer.</text>
</comment>
<comment type="subcellular location">
    <subcellularLocation>
        <location evidence="1">Cytoplasm</location>
    </subcellularLocation>
</comment>
<comment type="domain">
    <text evidence="1">Consists of three domains: the N-terminal catalytic domain, the editing domain and the C-terminal anticodon-binding domain.</text>
</comment>
<comment type="similarity">
    <text evidence="1">Belongs to the class-II aminoacyl-tRNA synthetase family. ProS type 1 subfamily.</text>
</comment>
<accession>Q48R89</accession>
<dbReference type="EC" id="6.1.1.15" evidence="1"/>
<dbReference type="EMBL" id="CP000056">
    <property type="protein sequence ID" value="AAX72771.1"/>
    <property type="molecule type" value="Genomic_DNA"/>
</dbReference>
<dbReference type="RefSeq" id="WP_011285192.1">
    <property type="nucleotide sequence ID" value="NC_007296.2"/>
</dbReference>
<dbReference type="SMR" id="Q48R89"/>
<dbReference type="KEGG" id="spb:M28_Spy1661"/>
<dbReference type="HOGENOM" id="CLU_016739_0_0_9"/>
<dbReference type="GO" id="GO:0005829">
    <property type="term" value="C:cytosol"/>
    <property type="evidence" value="ECO:0007669"/>
    <property type="project" value="TreeGrafter"/>
</dbReference>
<dbReference type="GO" id="GO:0002161">
    <property type="term" value="F:aminoacyl-tRNA deacylase activity"/>
    <property type="evidence" value="ECO:0007669"/>
    <property type="project" value="InterPro"/>
</dbReference>
<dbReference type="GO" id="GO:0005524">
    <property type="term" value="F:ATP binding"/>
    <property type="evidence" value="ECO:0007669"/>
    <property type="project" value="UniProtKB-UniRule"/>
</dbReference>
<dbReference type="GO" id="GO:0140096">
    <property type="term" value="F:catalytic activity, acting on a protein"/>
    <property type="evidence" value="ECO:0007669"/>
    <property type="project" value="UniProtKB-ARBA"/>
</dbReference>
<dbReference type="GO" id="GO:0004827">
    <property type="term" value="F:proline-tRNA ligase activity"/>
    <property type="evidence" value="ECO:0007669"/>
    <property type="project" value="UniProtKB-UniRule"/>
</dbReference>
<dbReference type="GO" id="GO:0016740">
    <property type="term" value="F:transferase activity"/>
    <property type="evidence" value="ECO:0007669"/>
    <property type="project" value="UniProtKB-ARBA"/>
</dbReference>
<dbReference type="GO" id="GO:0006433">
    <property type="term" value="P:prolyl-tRNA aminoacylation"/>
    <property type="evidence" value="ECO:0007669"/>
    <property type="project" value="UniProtKB-UniRule"/>
</dbReference>
<dbReference type="CDD" id="cd04334">
    <property type="entry name" value="ProRS-INS"/>
    <property type="match status" value="1"/>
</dbReference>
<dbReference type="CDD" id="cd00861">
    <property type="entry name" value="ProRS_anticodon_short"/>
    <property type="match status" value="1"/>
</dbReference>
<dbReference type="FunFam" id="3.40.50.800:FF:000011">
    <property type="entry name" value="Proline--tRNA ligase"/>
    <property type="match status" value="1"/>
</dbReference>
<dbReference type="Gene3D" id="3.40.50.800">
    <property type="entry name" value="Anticodon-binding domain"/>
    <property type="match status" value="1"/>
</dbReference>
<dbReference type="Gene3D" id="3.30.930.10">
    <property type="entry name" value="Bira Bifunctional Protein, Domain 2"/>
    <property type="match status" value="2"/>
</dbReference>
<dbReference type="Gene3D" id="3.90.960.10">
    <property type="entry name" value="YbaK/aminoacyl-tRNA synthetase-associated domain"/>
    <property type="match status" value="1"/>
</dbReference>
<dbReference type="HAMAP" id="MF_01569">
    <property type="entry name" value="Pro_tRNA_synth_type1"/>
    <property type="match status" value="1"/>
</dbReference>
<dbReference type="InterPro" id="IPR002314">
    <property type="entry name" value="aa-tRNA-synt_IIb"/>
</dbReference>
<dbReference type="InterPro" id="IPR006195">
    <property type="entry name" value="aa-tRNA-synth_II"/>
</dbReference>
<dbReference type="InterPro" id="IPR045864">
    <property type="entry name" value="aa-tRNA-synth_II/BPL/LPL"/>
</dbReference>
<dbReference type="InterPro" id="IPR004154">
    <property type="entry name" value="Anticodon-bd"/>
</dbReference>
<dbReference type="InterPro" id="IPR036621">
    <property type="entry name" value="Anticodon-bd_dom_sf"/>
</dbReference>
<dbReference type="InterPro" id="IPR002316">
    <property type="entry name" value="Pro-tRNA-ligase_IIa"/>
</dbReference>
<dbReference type="InterPro" id="IPR004500">
    <property type="entry name" value="Pro-tRNA-synth_IIa_bac-type"/>
</dbReference>
<dbReference type="InterPro" id="IPR023717">
    <property type="entry name" value="Pro-tRNA-Synthase_IIa_type1"/>
</dbReference>
<dbReference type="InterPro" id="IPR050062">
    <property type="entry name" value="Pro-tRNA_synthetase"/>
</dbReference>
<dbReference type="InterPro" id="IPR044140">
    <property type="entry name" value="ProRS_anticodon_short"/>
</dbReference>
<dbReference type="InterPro" id="IPR036754">
    <property type="entry name" value="YbaK/aa-tRNA-synt-asso_dom_sf"/>
</dbReference>
<dbReference type="InterPro" id="IPR007214">
    <property type="entry name" value="YbaK/aa-tRNA-synth-assoc-dom"/>
</dbReference>
<dbReference type="NCBIfam" id="NF006625">
    <property type="entry name" value="PRK09194.1"/>
    <property type="match status" value="1"/>
</dbReference>
<dbReference type="NCBIfam" id="TIGR00409">
    <property type="entry name" value="proS_fam_II"/>
    <property type="match status" value="2"/>
</dbReference>
<dbReference type="PANTHER" id="PTHR42753">
    <property type="entry name" value="MITOCHONDRIAL RIBOSOME PROTEIN L39/PROLYL-TRNA LIGASE FAMILY MEMBER"/>
    <property type="match status" value="1"/>
</dbReference>
<dbReference type="PANTHER" id="PTHR42753:SF2">
    <property type="entry name" value="PROLINE--TRNA LIGASE"/>
    <property type="match status" value="1"/>
</dbReference>
<dbReference type="Pfam" id="PF03129">
    <property type="entry name" value="HGTP_anticodon"/>
    <property type="match status" value="1"/>
</dbReference>
<dbReference type="Pfam" id="PF00587">
    <property type="entry name" value="tRNA-synt_2b"/>
    <property type="match status" value="1"/>
</dbReference>
<dbReference type="Pfam" id="PF04073">
    <property type="entry name" value="tRNA_edit"/>
    <property type="match status" value="1"/>
</dbReference>
<dbReference type="PRINTS" id="PR01046">
    <property type="entry name" value="TRNASYNTHPRO"/>
</dbReference>
<dbReference type="SUPFAM" id="SSF52954">
    <property type="entry name" value="Class II aaRS ABD-related"/>
    <property type="match status" value="1"/>
</dbReference>
<dbReference type="SUPFAM" id="SSF55681">
    <property type="entry name" value="Class II aaRS and biotin synthetases"/>
    <property type="match status" value="1"/>
</dbReference>
<dbReference type="SUPFAM" id="SSF55826">
    <property type="entry name" value="YbaK/ProRS associated domain"/>
    <property type="match status" value="1"/>
</dbReference>
<dbReference type="PROSITE" id="PS50862">
    <property type="entry name" value="AA_TRNA_LIGASE_II"/>
    <property type="match status" value="1"/>
</dbReference>
<reference key="1">
    <citation type="journal article" date="2005" name="J. Infect. Dis.">
        <title>Genome sequence of a serotype M28 strain of group A Streptococcus: potential new insights into puerperal sepsis and bacterial disease specificity.</title>
        <authorList>
            <person name="Green N.M."/>
            <person name="Zhang S."/>
            <person name="Porcella S.F."/>
            <person name="Nagiec M.J."/>
            <person name="Barbian K.D."/>
            <person name="Beres S.B."/>
            <person name="Lefebvre R.B."/>
            <person name="Musser J.M."/>
        </authorList>
    </citation>
    <scope>NUCLEOTIDE SEQUENCE [LARGE SCALE GENOMIC DNA]</scope>
    <source>
        <strain>MGAS6180</strain>
    </source>
</reference>
<organism>
    <name type="scientific">Streptococcus pyogenes serotype M28 (strain MGAS6180)</name>
    <dbReference type="NCBI Taxonomy" id="319701"/>
    <lineage>
        <taxon>Bacteria</taxon>
        <taxon>Bacillati</taxon>
        <taxon>Bacillota</taxon>
        <taxon>Bacilli</taxon>
        <taxon>Lactobacillales</taxon>
        <taxon>Streptococcaceae</taxon>
        <taxon>Streptococcus</taxon>
    </lineage>
</organism>
<proteinExistence type="inferred from homology"/>
<gene>
    <name evidence="1" type="primary">proS</name>
    <name type="ordered locus">M28_Spy1661</name>
</gene>
<protein>
    <recommendedName>
        <fullName evidence="1">Proline--tRNA ligase</fullName>
        <ecNumber evidence="1">6.1.1.15</ecNumber>
    </recommendedName>
    <alternativeName>
        <fullName evidence="1">Prolyl-tRNA synthetase</fullName>
        <shortName evidence="1">ProRS</shortName>
    </alternativeName>
</protein>
<feature type="chain" id="PRO_0000248784" description="Proline--tRNA ligase">
    <location>
        <begin position="1"/>
        <end position="618"/>
    </location>
</feature>
<name>SYP_STRPM</name>
<sequence length="618" mass="68657">MKQSKLLIPTLREMPSDAQVISHALMVRAGYVRQVSAGIYAYLPLANRTIEKFKTIMREEFEKIGAVEMLAPALLTADLWRESGRYETYGEDLYKLKNRDNSDFILGPTHEETFTTLVRDAVKSYKQLPLNLYQIQSKYRDEKRPRNGLLRTREFIMKDGYSFHHNYEDLDVTYEDYRQAYEAIFTRAGLDFKGIIGDGGAMGGKDSQEFMAVTPARTDLDRWVVLDKSIASMDDIPKEVLEDIKAELAAWMISGEDTIAYSTESSYAANLEMATNEYKPSSKVAAEDALAEVETPHCKTIDEVAAFLSVDETQTIKTLLFVADNEPVVALLVGNDHINTVKLKNYLAADFLEPASEEEARAFFGAGFGSLGPVNLAQGSRIVADRKVQNLTNAVAGANKDGFHVTGVNPGRDFQAEYVDIREVKEGEMSPDGHGVLQFARGIEVGHIFKLGTRYSDSMGATILDENGRTVPIVMGCYGIGVSRILSAVIEQHARLFVNKTPKGDYRYAWGINFPKELAPFDVHLITVNVKDQVAQDLTAKLEADLMAKGYDVLTDDRNERVGSKFSDSDLIGLPIRVTVGKKAAEGIVEIKIKATGDSIEVNAENLIETLEILTKEH</sequence>
<evidence type="ECO:0000255" key="1">
    <source>
        <dbReference type="HAMAP-Rule" id="MF_01569"/>
    </source>
</evidence>
<keyword id="KW-0030">Aminoacyl-tRNA synthetase</keyword>
<keyword id="KW-0067">ATP-binding</keyword>
<keyword id="KW-0963">Cytoplasm</keyword>
<keyword id="KW-0436">Ligase</keyword>
<keyword id="KW-0547">Nucleotide-binding</keyword>
<keyword id="KW-0648">Protein biosynthesis</keyword>